<organism>
    <name type="scientific">Aeromonas hydrophila subsp. hydrophila (strain ATCC 7966 / DSM 30187 / BCRC 13018 / CCUG 14551 / JCM 1027 / KCTC 2358 / NCIMB 9240 / NCTC 8049)</name>
    <dbReference type="NCBI Taxonomy" id="380703"/>
    <lineage>
        <taxon>Bacteria</taxon>
        <taxon>Pseudomonadati</taxon>
        <taxon>Pseudomonadota</taxon>
        <taxon>Gammaproteobacteria</taxon>
        <taxon>Aeromonadales</taxon>
        <taxon>Aeromonadaceae</taxon>
        <taxon>Aeromonas</taxon>
    </lineage>
</organism>
<dbReference type="EC" id="2.8.4.3" evidence="1"/>
<dbReference type="EMBL" id="CP000462">
    <property type="protein sequence ID" value="ABK37909.1"/>
    <property type="molecule type" value="Genomic_DNA"/>
</dbReference>
<dbReference type="RefSeq" id="WP_011707016.1">
    <property type="nucleotide sequence ID" value="NC_008570.1"/>
</dbReference>
<dbReference type="RefSeq" id="YP_857732.1">
    <property type="nucleotide sequence ID" value="NC_008570.1"/>
</dbReference>
<dbReference type="SMR" id="A0KN81"/>
<dbReference type="STRING" id="380703.AHA_3241"/>
<dbReference type="EnsemblBacteria" id="ABK37909">
    <property type="protein sequence ID" value="ABK37909"/>
    <property type="gene ID" value="AHA_3241"/>
</dbReference>
<dbReference type="GeneID" id="4490695"/>
<dbReference type="KEGG" id="aha:AHA_3241"/>
<dbReference type="PATRIC" id="fig|380703.7.peg.3236"/>
<dbReference type="eggNOG" id="COG0621">
    <property type="taxonomic scope" value="Bacteria"/>
</dbReference>
<dbReference type="HOGENOM" id="CLU_018697_2_0_6"/>
<dbReference type="OrthoDB" id="9805215at2"/>
<dbReference type="Proteomes" id="UP000000756">
    <property type="component" value="Chromosome"/>
</dbReference>
<dbReference type="GO" id="GO:0005829">
    <property type="term" value="C:cytosol"/>
    <property type="evidence" value="ECO:0007669"/>
    <property type="project" value="TreeGrafter"/>
</dbReference>
<dbReference type="GO" id="GO:0051539">
    <property type="term" value="F:4 iron, 4 sulfur cluster binding"/>
    <property type="evidence" value="ECO:0007669"/>
    <property type="project" value="UniProtKB-UniRule"/>
</dbReference>
<dbReference type="GO" id="GO:0046872">
    <property type="term" value="F:metal ion binding"/>
    <property type="evidence" value="ECO:0007669"/>
    <property type="project" value="UniProtKB-KW"/>
</dbReference>
<dbReference type="GO" id="GO:0035597">
    <property type="term" value="F:N6-isopentenyladenosine methylthiotransferase activity"/>
    <property type="evidence" value="ECO:0007669"/>
    <property type="project" value="TreeGrafter"/>
</dbReference>
<dbReference type="CDD" id="cd01335">
    <property type="entry name" value="Radical_SAM"/>
    <property type="match status" value="1"/>
</dbReference>
<dbReference type="FunFam" id="3.40.50.12160:FF:000001">
    <property type="entry name" value="tRNA-2-methylthio-N(6)-dimethylallyladenosine synthase"/>
    <property type="match status" value="1"/>
</dbReference>
<dbReference type="FunFam" id="3.80.30.20:FF:000001">
    <property type="entry name" value="tRNA-2-methylthio-N(6)-dimethylallyladenosine synthase 2"/>
    <property type="match status" value="1"/>
</dbReference>
<dbReference type="Gene3D" id="3.40.50.12160">
    <property type="entry name" value="Methylthiotransferase, N-terminal domain"/>
    <property type="match status" value="1"/>
</dbReference>
<dbReference type="Gene3D" id="3.80.30.20">
    <property type="entry name" value="tm_1862 like domain"/>
    <property type="match status" value="1"/>
</dbReference>
<dbReference type="HAMAP" id="MF_01864">
    <property type="entry name" value="tRNA_metthiotr_MiaB"/>
    <property type="match status" value="1"/>
</dbReference>
<dbReference type="InterPro" id="IPR006638">
    <property type="entry name" value="Elp3/MiaA/NifB-like_rSAM"/>
</dbReference>
<dbReference type="InterPro" id="IPR005839">
    <property type="entry name" value="Methylthiotransferase"/>
</dbReference>
<dbReference type="InterPro" id="IPR020612">
    <property type="entry name" value="Methylthiotransferase_CS"/>
</dbReference>
<dbReference type="InterPro" id="IPR013848">
    <property type="entry name" value="Methylthiotransferase_N"/>
</dbReference>
<dbReference type="InterPro" id="IPR038135">
    <property type="entry name" value="Methylthiotransferase_N_sf"/>
</dbReference>
<dbReference type="InterPro" id="IPR006463">
    <property type="entry name" value="MiaB_methiolase"/>
</dbReference>
<dbReference type="InterPro" id="IPR007197">
    <property type="entry name" value="rSAM"/>
</dbReference>
<dbReference type="InterPro" id="IPR023404">
    <property type="entry name" value="rSAM_horseshoe"/>
</dbReference>
<dbReference type="InterPro" id="IPR002792">
    <property type="entry name" value="TRAM_dom"/>
</dbReference>
<dbReference type="NCBIfam" id="TIGR01574">
    <property type="entry name" value="miaB-methiolase"/>
    <property type="match status" value="1"/>
</dbReference>
<dbReference type="NCBIfam" id="TIGR00089">
    <property type="entry name" value="MiaB/RimO family radical SAM methylthiotransferase"/>
    <property type="match status" value="1"/>
</dbReference>
<dbReference type="PANTHER" id="PTHR43020">
    <property type="entry name" value="CDK5 REGULATORY SUBUNIT-ASSOCIATED PROTEIN 1"/>
    <property type="match status" value="1"/>
</dbReference>
<dbReference type="PANTHER" id="PTHR43020:SF2">
    <property type="entry name" value="MITOCHONDRIAL TRNA METHYLTHIOTRANSFERASE CDK5RAP1"/>
    <property type="match status" value="1"/>
</dbReference>
<dbReference type="Pfam" id="PF04055">
    <property type="entry name" value="Radical_SAM"/>
    <property type="match status" value="1"/>
</dbReference>
<dbReference type="Pfam" id="PF01938">
    <property type="entry name" value="TRAM"/>
    <property type="match status" value="1"/>
</dbReference>
<dbReference type="Pfam" id="PF00919">
    <property type="entry name" value="UPF0004"/>
    <property type="match status" value="1"/>
</dbReference>
<dbReference type="SFLD" id="SFLDF00273">
    <property type="entry name" value="(dimethylallyl)adenosine_tRNA"/>
    <property type="match status" value="1"/>
</dbReference>
<dbReference type="SFLD" id="SFLDG01082">
    <property type="entry name" value="B12-binding_domain_containing"/>
    <property type="match status" value="1"/>
</dbReference>
<dbReference type="SFLD" id="SFLDG01061">
    <property type="entry name" value="methylthiotransferase"/>
    <property type="match status" value="1"/>
</dbReference>
<dbReference type="SMART" id="SM00729">
    <property type="entry name" value="Elp3"/>
    <property type="match status" value="1"/>
</dbReference>
<dbReference type="SUPFAM" id="SSF102114">
    <property type="entry name" value="Radical SAM enzymes"/>
    <property type="match status" value="1"/>
</dbReference>
<dbReference type="PROSITE" id="PS51449">
    <property type="entry name" value="MTTASE_N"/>
    <property type="match status" value="1"/>
</dbReference>
<dbReference type="PROSITE" id="PS01278">
    <property type="entry name" value="MTTASE_RADICAL"/>
    <property type="match status" value="1"/>
</dbReference>
<dbReference type="PROSITE" id="PS51918">
    <property type="entry name" value="RADICAL_SAM"/>
    <property type="match status" value="1"/>
</dbReference>
<dbReference type="PROSITE" id="PS50926">
    <property type="entry name" value="TRAM"/>
    <property type="match status" value="1"/>
</dbReference>
<gene>
    <name evidence="1" type="primary">miaB</name>
    <name type="ordered locus">AHA_3241</name>
</gene>
<comment type="function">
    <text evidence="1">Catalyzes the methylthiolation of N6-(dimethylallyl)adenosine (i(6)A), leading to the formation of 2-methylthio-N6-(dimethylallyl)adenosine (ms(2)i(6)A) at position 37 in tRNAs that read codons beginning with uridine.</text>
</comment>
<comment type="catalytic activity">
    <reaction evidence="1">
        <text>N(6)-dimethylallyladenosine(37) in tRNA + (sulfur carrier)-SH + AH2 + 2 S-adenosyl-L-methionine = 2-methylsulfanyl-N(6)-dimethylallyladenosine(37) in tRNA + (sulfur carrier)-H + 5'-deoxyadenosine + L-methionine + A + S-adenosyl-L-homocysteine + 2 H(+)</text>
        <dbReference type="Rhea" id="RHEA:37067"/>
        <dbReference type="Rhea" id="RHEA-COMP:10375"/>
        <dbReference type="Rhea" id="RHEA-COMP:10376"/>
        <dbReference type="Rhea" id="RHEA-COMP:14737"/>
        <dbReference type="Rhea" id="RHEA-COMP:14739"/>
        <dbReference type="ChEBI" id="CHEBI:13193"/>
        <dbReference type="ChEBI" id="CHEBI:15378"/>
        <dbReference type="ChEBI" id="CHEBI:17319"/>
        <dbReference type="ChEBI" id="CHEBI:17499"/>
        <dbReference type="ChEBI" id="CHEBI:29917"/>
        <dbReference type="ChEBI" id="CHEBI:57844"/>
        <dbReference type="ChEBI" id="CHEBI:57856"/>
        <dbReference type="ChEBI" id="CHEBI:59789"/>
        <dbReference type="ChEBI" id="CHEBI:64428"/>
        <dbReference type="ChEBI" id="CHEBI:74415"/>
        <dbReference type="ChEBI" id="CHEBI:74417"/>
        <dbReference type="EC" id="2.8.4.3"/>
    </reaction>
</comment>
<comment type="cofactor">
    <cofactor evidence="1">
        <name>[4Fe-4S] cluster</name>
        <dbReference type="ChEBI" id="CHEBI:49883"/>
    </cofactor>
    <text evidence="1">Binds 2 [4Fe-4S] clusters. One cluster is coordinated with 3 cysteines and an exchangeable S-adenosyl-L-methionine.</text>
</comment>
<comment type="subunit">
    <text evidence="1">Monomer.</text>
</comment>
<comment type="subcellular location">
    <subcellularLocation>
        <location evidence="1">Cytoplasm</location>
    </subcellularLocation>
</comment>
<comment type="similarity">
    <text evidence="1">Belongs to the methylthiotransferase family. MiaB subfamily.</text>
</comment>
<keyword id="KW-0004">4Fe-4S</keyword>
<keyword id="KW-0963">Cytoplasm</keyword>
<keyword id="KW-0408">Iron</keyword>
<keyword id="KW-0411">Iron-sulfur</keyword>
<keyword id="KW-0479">Metal-binding</keyword>
<keyword id="KW-1185">Reference proteome</keyword>
<keyword id="KW-0949">S-adenosyl-L-methionine</keyword>
<keyword id="KW-0808">Transferase</keyword>
<keyword id="KW-0819">tRNA processing</keyword>
<protein>
    <recommendedName>
        <fullName evidence="1">tRNA-2-methylthio-N(6)-dimethylallyladenosine synthase</fullName>
        <ecNumber evidence="1">2.8.4.3</ecNumber>
    </recommendedName>
    <alternativeName>
        <fullName evidence="1">(Dimethylallyl)adenosine tRNA methylthiotransferase MiaB</fullName>
    </alternativeName>
    <alternativeName>
        <fullName evidence="1">tRNA-i(6)A37 methylthiotransferase</fullName>
    </alternativeName>
</protein>
<accession>A0KN81</accession>
<evidence type="ECO:0000255" key="1">
    <source>
        <dbReference type="HAMAP-Rule" id="MF_01864"/>
    </source>
</evidence>
<evidence type="ECO:0000255" key="2">
    <source>
        <dbReference type="PROSITE-ProRule" id="PRU01266"/>
    </source>
</evidence>
<feature type="chain" id="PRO_0000374097" description="tRNA-2-methylthio-N(6)-dimethylallyladenosine synthase">
    <location>
        <begin position="1"/>
        <end position="477"/>
    </location>
</feature>
<feature type="domain" description="MTTase N-terminal" evidence="1">
    <location>
        <begin position="3"/>
        <end position="120"/>
    </location>
</feature>
<feature type="domain" description="Radical SAM core" evidence="2">
    <location>
        <begin position="143"/>
        <end position="375"/>
    </location>
</feature>
<feature type="domain" description="TRAM" evidence="1">
    <location>
        <begin position="378"/>
        <end position="441"/>
    </location>
</feature>
<feature type="binding site" evidence="1">
    <location>
        <position position="12"/>
    </location>
    <ligand>
        <name>[4Fe-4S] cluster</name>
        <dbReference type="ChEBI" id="CHEBI:49883"/>
        <label>1</label>
    </ligand>
</feature>
<feature type="binding site" evidence="1">
    <location>
        <position position="49"/>
    </location>
    <ligand>
        <name>[4Fe-4S] cluster</name>
        <dbReference type="ChEBI" id="CHEBI:49883"/>
        <label>1</label>
    </ligand>
</feature>
<feature type="binding site" evidence="1">
    <location>
        <position position="83"/>
    </location>
    <ligand>
        <name>[4Fe-4S] cluster</name>
        <dbReference type="ChEBI" id="CHEBI:49883"/>
        <label>1</label>
    </ligand>
</feature>
<feature type="binding site" evidence="1">
    <location>
        <position position="157"/>
    </location>
    <ligand>
        <name>[4Fe-4S] cluster</name>
        <dbReference type="ChEBI" id="CHEBI:49883"/>
        <label>2</label>
        <note>4Fe-4S-S-AdoMet</note>
    </ligand>
</feature>
<feature type="binding site" evidence="1">
    <location>
        <position position="161"/>
    </location>
    <ligand>
        <name>[4Fe-4S] cluster</name>
        <dbReference type="ChEBI" id="CHEBI:49883"/>
        <label>2</label>
        <note>4Fe-4S-S-AdoMet</note>
    </ligand>
</feature>
<feature type="binding site" evidence="1">
    <location>
        <position position="164"/>
    </location>
    <ligand>
        <name>[4Fe-4S] cluster</name>
        <dbReference type="ChEBI" id="CHEBI:49883"/>
        <label>2</label>
        <note>4Fe-4S-S-AdoMet</note>
    </ligand>
</feature>
<sequence>MSKKLHIKTWGCQMNEYDSSKMADLLDASNGYTLTEEPEEADVLLLNTCSIREKAQEKVFHQLGRWKKLKANKPGLVIGVGGCVASQEGDNIRTRAPYVDIVFGPQTLHRLPTMIKQVQEGRGAQVDVAFPEIEKFDSLPEPRAEGATAFVSIMEGCSKYCSFCVVPYTRGEEVSRPLDDVLYEIAQLAQQGVREVNLLGQNVNAYRGPTFDGGICTFAELLRLVAAIDGIDRIRYTTSHPIEFTDDIIEVYKDTPEVVSFLHLPVQSGSDRILTMMKRPHTVLEYKSKIRRLRAARPDITISSDFIVGFPNETDEDFEATMKLIEEINFDMSFSFIYSPRPGTPAADLPDDVDMEVKKARLTRLQHVINNQSMQIGRAMLGSTQRILVEGPSKLDPMQLCGRTENNRVVNFEGPHTLIGGFADVEITEVRPNSLRGKFLRGENEMNLRIATAPSEILARRPDNVPDPLGVAAFTPH</sequence>
<reference key="1">
    <citation type="journal article" date="2006" name="J. Bacteriol.">
        <title>Genome sequence of Aeromonas hydrophila ATCC 7966T: jack of all trades.</title>
        <authorList>
            <person name="Seshadri R."/>
            <person name="Joseph S.W."/>
            <person name="Chopra A.K."/>
            <person name="Sha J."/>
            <person name="Shaw J."/>
            <person name="Graf J."/>
            <person name="Haft D.H."/>
            <person name="Wu M."/>
            <person name="Ren Q."/>
            <person name="Rosovitz M.J."/>
            <person name="Madupu R."/>
            <person name="Tallon L."/>
            <person name="Kim M."/>
            <person name="Jin S."/>
            <person name="Vuong H."/>
            <person name="Stine O.C."/>
            <person name="Ali A."/>
            <person name="Horneman A.J."/>
            <person name="Heidelberg J.F."/>
        </authorList>
    </citation>
    <scope>NUCLEOTIDE SEQUENCE [LARGE SCALE GENOMIC DNA]</scope>
    <source>
        <strain>ATCC 7966 / DSM 30187 / BCRC 13018 / CCUG 14551 / JCM 1027 / KCTC 2358 / NCIMB 9240 / NCTC 8049</strain>
    </source>
</reference>
<name>MIAB_AERHH</name>
<proteinExistence type="inferred from homology"/>